<dbReference type="EC" id="1.5.1.53" evidence="2"/>
<dbReference type="EMBL" id="AY854631">
    <property type="protein sequence ID" value="AAW39033.1"/>
    <property type="molecule type" value="mRNA"/>
</dbReference>
<dbReference type="RefSeq" id="NP_001011685.1">
    <property type="nucleotide sequence ID" value="NM_001011685.1"/>
</dbReference>
<dbReference type="SMR" id="Q5I598"/>
<dbReference type="FunCoup" id="Q5I598">
    <property type="interactions" value="1179"/>
</dbReference>
<dbReference type="STRING" id="9913.ENSBTAP00000070958"/>
<dbReference type="PaxDb" id="9913-ENSBTAP00000027586"/>
<dbReference type="GeneID" id="497032"/>
<dbReference type="KEGG" id="bta:497032"/>
<dbReference type="CTD" id="4524"/>
<dbReference type="eggNOG" id="KOG0564">
    <property type="taxonomic scope" value="Eukaryota"/>
</dbReference>
<dbReference type="InParanoid" id="Q5I598"/>
<dbReference type="OrthoDB" id="16284at2759"/>
<dbReference type="BRENDA" id="1.5.1.20">
    <property type="organism ID" value="908"/>
</dbReference>
<dbReference type="UniPathway" id="UPA00193"/>
<dbReference type="Proteomes" id="UP000009136">
    <property type="component" value="Unplaced"/>
</dbReference>
<dbReference type="GO" id="GO:0071949">
    <property type="term" value="F:FAD binding"/>
    <property type="evidence" value="ECO:0000318"/>
    <property type="project" value="GO_Central"/>
</dbReference>
<dbReference type="GO" id="GO:0004489">
    <property type="term" value="F:methylenetetrahydrofolate reductase (NAD(P)H) activity"/>
    <property type="evidence" value="ECO:0000250"/>
    <property type="project" value="UniProtKB"/>
</dbReference>
<dbReference type="GO" id="GO:0106313">
    <property type="term" value="F:methylenetetrahydrofolate reductase (NADPH) activity"/>
    <property type="evidence" value="ECO:0007669"/>
    <property type="project" value="RHEA"/>
</dbReference>
<dbReference type="GO" id="GO:0009086">
    <property type="term" value="P:methionine biosynthetic process"/>
    <property type="evidence" value="ECO:0000318"/>
    <property type="project" value="GO_Central"/>
</dbReference>
<dbReference type="GO" id="GO:0035999">
    <property type="term" value="P:tetrahydrofolate interconversion"/>
    <property type="evidence" value="ECO:0000250"/>
    <property type="project" value="UniProtKB"/>
</dbReference>
<dbReference type="CDD" id="cd00537">
    <property type="entry name" value="MTHFR"/>
    <property type="match status" value="1"/>
</dbReference>
<dbReference type="FunFam" id="3.20.20.220:FF:000003">
    <property type="entry name" value="Methylenetetrahydrofolate reductase"/>
    <property type="match status" value="1"/>
</dbReference>
<dbReference type="Gene3D" id="3.20.20.220">
    <property type="match status" value="1"/>
</dbReference>
<dbReference type="InterPro" id="IPR029041">
    <property type="entry name" value="FAD-linked_oxidoreductase-like"/>
</dbReference>
<dbReference type="InterPro" id="IPR004621">
    <property type="entry name" value="Fadh2_euk"/>
</dbReference>
<dbReference type="InterPro" id="IPR003171">
    <property type="entry name" value="Mehydrof_redctse-like"/>
</dbReference>
<dbReference type="InterPro" id="IPR053806">
    <property type="entry name" value="MTHFR_C"/>
</dbReference>
<dbReference type="NCBIfam" id="TIGR00677">
    <property type="entry name" value="fadh2_euk"/>
    <property type="match status" value="1"/>
</dbReference>
<dbReference type="PANTHER" id="PTHR45754">
    <property type="entry name" value="METHYLENETETRAHYDROFOLATE REDUCTASE"/>
    <property type="match status" value="1"/>
</dbReference>
<dbReference type="PANTHER" id="PTHR45754:SF3">
    <property type="entry name" value="METHYLENETETRAHYDROFOLATE REDUCTASE (NADPH)"/>
    <property type="match status" value="1"/>
</dbReference>
<dbReference type="Pfam" id="PF02219">
    <property type="entry name" value="MTHFR"/>
    <property type="match status" value="1"/>
</dbReference>
<dbReference type="Pfam" id="PF21895">
    <property type="entry name" value="MTHFR_C"/>
    <property type="match status" value="1"/>
</dbReference>
<dbReference type="SUPFAM" id="SSF51730">
    <property type="entry name" value="FAD-linked oxidoreductase"/>
    <property type="match status" value="1"/>
</dbReference>
<gene>
    <name type="primary">MTHFR</name>
</gene>
<comment type="function">
    <text evidence="2">Catalyzes the conversion of 5,10-methylenetetrahydrofolate to 5-methyltetrahydrofolate, a cosubstrate for homocysteine remethylation to methionine. Represents a key regulatory connection between the folate and methionine cycles.</text>
</comment>
<comment type="catalytic activity">
    <reaction evidence="2">
        <text>(6S)-5-methyl-5,6,7,8-tetrahydrofolate + NADP(+) = (6R)-5,10-methylene-5,6,7,8-tetrahydrofolate + NADPH + H(+)</text>
        <dbReference type="Rhea" id="RHEA:19817"/>
        <dbReference type="ChEBI" id="CHEBI:15378"/>
        <dbReference type="ChEBI" id="CHEBI:15636"/>
        <dbReference type="ChEBI" id="CHEBI:18608"/>
        <dbReference type="ChEBI" id="CHEBI:57783"/>
        <dbReference type="ChEBI" id="CHEBI:58349"/>
        <dbReference type="EC" id="1.5.1.53"/>
    </reaction>
    <physiologicalReaction direction="right-to-left" evidence="2">
        <dbReference type="Rhea" id="RHEA:19819"/>
    </physiologicalReaction>
</comment>
<comment type="cofactor">
    <cofactor evidence="2">
        <name>FAD</name>
        <dbReference type="ChEBI" id="CHEBI:57692"/>
    </cofactor>
</comment>
<comment type="activity regulation">
    <text evidence="2">Allosterically regulated by S-adenosylmethionine (SAM).</text>
</comment>
<comment type="pathway">
    <text evidence="2">One-carbon metabolism; tetrahydrofolate interconversion.</text>
</comment>
<comment type="subunit">
    <text evidence="2">Homodimer.</text>
</comment>
<comment type="domain">
    <text evidence="2">Contains a serine-rich phosphorylation region at the N-terminal and an eukaryote-only S-adenosylmethionine (SAM)-binding domain at the C-terminal. Through asymmetric homodimerization, the two regions are positioned next to each other and N-terminal phosphorylation increases sensitivity to SAM binding and inhibition.</text>
</comment>
<comment type="PTM">
    <text evidence="2">Phosphorylation of an N-terminal serine-rich phosphorylation region increases sensitivity to S-adenosylmethionine and inhibition.</text>
</comment>
<comment type="similarity">
    <text evidence="4">Belongs to the methylenetetrahydrofolate reductase family.</text>
</comment>
<reference key="1">
    <citation type="submission" date="2004-12" db="EMBL/GenBank/DDBJ databases">
        <title>Interactions folic acid-vitamin B12-methionine: effects on liver metabolism and production of dairy cows.</title>
        <authorList>
            <person name="Charest R."/>
            <person name="Beaudry D."/>
            <person name="Girard C."/>
            <person name="Palin M.-F."/>
        </authorList>
    </citation>
    <scope>NUCLEOTIDE SEQUENCE [MRNA]</scope>
    <source>
        <tissue>Liver</tissue>
    </source>
</reference>
<proteinExistence type="evidence at transcript level"/>
<feature type="chain" id="PRO_0000236275" description="Methylenetetrahydrofolate reductase (NADPH)">
    <location>
        <begin position="1"/>
        <end position="655"/>
    </location>
</feature>
<feature type="region of interest" description="Disordered" evidence="3">
    <location>
        <begin position="1"/>
        <end position="39"/>
    </location>
</feature>
<feature type="compositionally biased region" description="Low complexity" evidence="3">
    <location>
        <begin position="11"/>
        <end position="35"/>
    </location>
</feature>
<feature type="active site" description="Proton donor/acceptor" evidence="1">
    <location>
        <position position="62"/>
    </location>
</feature>
<feature type="binding site" evidence="1">
    <location>
        <begin position="62"/>
        <end position="67"/>
    </location>
    <ligand>
        <name>NAD(+)</name>
        <dbReference type="ChEBI" id="CHEBI:57540"/>
    </ligand>
</feature>
<feature type="binding site" evidence="2">
    <location>
        <begin position="93"/>
        <end position="94"/>
    </location>
    <ligand>
        <name>FAD</name>
        <dbReference type="ChEBI" id="CHEBI:57692"/>
    </ligand>
</feature>
<feature type="binding site" evidence="1">
    <location>
        <begin position="93"/>
        <end position="94"/>
    </location>
    <ligand>
        <name>NAD(+)</name>
        <dbReference type="ChEBI" id="CHEBI:57540"/>
    </ligand>
</feature>
<feature type="binding site" evidence="2">
    <location>
        <position position="126"/>
    </location>
    <ligand>
        <name>FAD</name>
        <dbReference type="ChEBI" id="CHEBI:57692"/>
    </ligand>
</feature>
<feature type="binding site" evidence="2">
    <location>
        <begin position="156"/>
        <end position="158"/>
    </location>
    <ligand>
        <name>FAD</name>
        <dbReference type="ChEBI" id="CHEBI:57692"/>
    </ligand>
</feature>
<feature type="binding site" evidence="1">
    <location>
        <position position="158"/>
    </location>
    <ligand>
        <name>substrate</name>
    </ligand>
</feature>
<feature type="binding site" evidence="2">
    <location>
        <begin position="173"/>
        <end position="174"/>
    </location>
    <ligand>
        <name>FAD</name>
        <dbReference type="ChEBI" id="CHEBI:57692"/>
    </ligand>
</feature>
<feature type="binding site" evidence="2">
    <location>
        <position position="196"/>
    </location>
    <ligand>
        <name>FAD</name>
        <dbReference type="ChEBI" id="CHEBI:57692"/>
    </ligand>
</feature>
<feature type="binding site" evidence="2">
    <location>
        <begin position="200"/>
        <end position="203"/>
    </location>
    <ligand>
        <name>FAD</name>
        <dbReference type="ChEBI" id="CHEBI:57692"/>
    </ligand>
</feature>
<feature type="binding site" evidence="2">
    <location>
        <position position="209"/>
    </location>
    <ligand>
        <name>FAD</name>
        <dbReference type="ChEBI" id="CHEBI:57692"/>
    </ligand>
</feature>
<feature type="binding site" evidence="2">
    <location>
        <position position="216"/>
    </location>
    <ligand>
        <name>FAD</name>
        <dbReference type="ChEBI" id="CHEBI:57692"/>
    </ligand>
</feature>
<feature type="binding site" evidence="1">
    <location>
        <position position="227"/>
    </location>
    <ligand>
        <name>substrate</name>
    </ligand>
</feature>
<feature type="binding site" evidence="1">
    <location>
        <position position="320"/>
    </location>
    <ligand>
        <name>substrate</name>
    </ligand>
</feature>
<feature type="binding site" evidence="1">
    <location>
        <position position="324"/>
    </location>
    <ligand>
        <name>substrate</name>
    </ligand>
</feature>
<feature type="binding site" evidence="2">
    <location>
        <position position="455"/>
    </location>
    <ligand>
        <name>S-adenosyl-L-methionine</name>
        <dbReference type="ChEBI" id="CHEBI:59789"/>
    </ligand>
</feature>
<feature type="binding site" evidence="2">
    <location>
        <begin position="460"/>
        <end position="463"/>
    </location>
    <ligand>
        <name>S-adenosyl-L-methionine</name>
        <dbReference type="ChEBI" id="CHEBI:59789"/>
    </ligand>
</feature>
<feature type="binding site" evidence="2">
    <location>
        <begin position="480"/>
        <end position="484"/>
    </location>
    <ligand>
        <name>S-adenosyl-L-methionine</name>
        <dbReference type="ChEBI" id="CHEBI:59789"/>
    </ligand>
</feature>
<feature type="binding site" evidence="2">
    <location>
        <position position="559"/>
    </location>
    <ligand>
        <name>S-adenosyl-L-methionine</name>
        <dbReference type="ChEBI" id="CHEBI:59789"/>
    </ligand>
</feature>
<feature type="binding site" evidence="2">
    <location>
        <position position="572"/>
    </location>
    <ligand>
        <name>S-adenosyl-L-methionine</name>
        <dbReference type="ChEBI" id="CHEBI:59789"/>
    </ligand>
</feature>
<feature type="modified residue" description="Phosphoserine" evidence="2">
    <location>
        <position position="10"/>
    </location>
</feature>
<feature type="modified residue" description="Phosphoserine" evidence="2">
    <location>
        <position position="18"/>
    </location>
</feature>
<feature type="modified residue" description="Phosphoserine" evidence="2">
    <location>
        <position position="19"/>
    </location>
</feature>
<feature type="modified residue" description="Phosphoserine" evidence="2">
    <location>
        <position position="20"/>
    </location>
</feature>
<feature type="modified residue" description="Phosphoserine" evidence="2">
    <location>
        <position position="22"/>
    </location>
</feature>
<feature type="modified residue" description="Phosphoserine" evidence="2">
    <location>
        <position position="24"/>
    </location>
</feature>
<feature type="modified residue" description="Phosphoserine" evidence="2">
    <location>
        <position position="25"/>
    </location>
</feature>
<feature type="modified residue" description="Phosphoserine" evidence="2">
    <location>
        <position position="28"/>
    </location>
</feature>
<feature type="modified residue" description="Phosphoserine" evidence="2">
    <location>
        <position position="29"/>
    </location>
</feature>
<feature type="modified residue" description="Phosphothreonine" evidence="2">
    <location>
        <position position="33"/>
    </location>
</feature>
<feature type="modified residue" description="Phosphothreonine" evidence="2">
    <location>
        <position position="93"/>
    </location>
</feature>
<feature type="modified residue" description="Phosphoserine" evidence="2">
    <location>
        <position position="102"/>
    </location>
</feature>
<feature type="modified residue" description="Phosphoserine" evidence="2">
    <location>
        <position position="393"/>
    </location>
</feature>
<feature type="modified residue" description="Phosphothreonine" evidence="2">
    <location>
        <position position="450"/>
    </location>
</feature>
<accession>Q5I598</accession>
<protein>
    <recommendedName>
        <fullName evidence="4">Methylenetetrahydrofolate reductase (NADPH)</fullName>
        <ecNumber evidence="2">1.5.1.53</ecNumber>
    </recommendedName>
</protein>
<organism>
    <name type="scientific">Bos taurus</name>
    <name type="common">Bovine</name>
    <dbReference type="NCBI Taxonomy" id="9913"/>
    <lineage>
        <taxon>Eukaryota</taxon>
        <taxon>Metazoa</taxon>
        <taxon>Chordata</taxon>
        <taxon>Craniata</taxon>
        <taxon>Vertebrata</taxon>
        <taxon>Euteleostomi</taxon>
        <taxon>Mammalia</taxon>
        <taxon>Eutheria</taxon>
        <taxon>Laurasiatheria</taxon>
        <taxon>Artiodactyla</taxon>
        <taxon>Ruminantia</taxon>
        <taxon>Pecora</taxon>
        <taxon>Bovidae</taxon>
        <taxon>Bovinae</taxon>
        <taxon>Bos</taxon>
    </lineage>
</organism>
<evidence type="ECO:0000250" key="1"/>
<evidence type="ECO:0000250" key="2">
    <source>
        <dbReference type="UniProtKB" id="P42898"/>
    </source>
</evidence>
<evidence type="ECO:0000256" key="3">
    <source>
        <dbReference type="SAM" id="MobiDB-lite"/>
    </source>
</evidence>
<evidence type="ECO:0000305" key="4"/>
<keyword id="KW-0021">Allosteric enzyme</keyword>
<keyword id="KW-0274">FAD</keyword>
<keyword id="KW-0285">Flavoprotein</keyword>
<keyword id="KW-0521">NADP</keyword>
<keyword id="KW-0560">Oxidoreductase</keyword>
<keyword id="KW-0597">Phosphoprotein</keyword>
<keyword id="KW-1185">Reference proteome</keyword>
<sequence length="655" mass="74485">MVNEPRGNGSPGPRWEGSSSGSESSRTSSRCSTPGLDPERCERLREKMKRKMDSGDKWFSLEFFPPRTAQGAVNLISRFDRMGAGGPLFVDVTWHPAGDPGSDKETSSMVIASTAVNYCGLETILHMTCCHQSREEITGHLNKAKQLGLKNILALRGDPIGDQWEEEEGGFNYATDLVKHIRNEFGDYFDVCVAGYPKGHPEGESFEADLKHLKEKVAAGADFIITQLFFEAETFFRFVKACSEIGITCPVLPGIFPIQGYHSLRQLVKLSKLEVPQQIKDVIEPIKDNDAAIRNYGIEQAVSLCQELLASGLVPGLHFYTLNREVATIEVLKRLGLWIEDPRRPLPWALSAHPKRRVEDVRPIFWASRPKSYIYRTQEWDEFPNGRWGNSSSPAFGELKDYYLFYLKSKSPKEELLKMWGEELTSEESVFQVFAHHLSGEPNQNGYKVTCLPWNDEPLAAETSLMKEELLRVNRRGILTINSQPNINGKPSSDPIVGWGPSGGYVFQKAYLEFFTSRETVEALLQVLKKYELRVNYHIVDVKGENITNAPELQPNAVTWGIFPGREIIQPTVVDPVSFMFWKDEAFALWIEQWGKLYEEESPSRMIIQYIHDNYFLVNLVDNEFPLDNCLWQVVEDTFELLSRPPQDKRETEAL</sequence>
<name>MTHR_BOVIN</name>